<feature type="chain" id="PRO_0000235582" description="Aspartate--tRNA ligase">
    <location>
        <begin position="1"/>
        <end position="588"/>
    </location>
</feature>
<feature type="region of interest" description="Aspartate" evidence="1">
    <location>
        <begin position="198"/>
        <end position="201"/>
    </location>
</feature>
<feature type="binding site" evidence="1">
    <location>
        <position position="174"/>
    </location>
    <ligand>
        <name>L-aspartate</name>
        <dbReference type="ChEBI" id="CHEBI:29991"/>
    </ligand>
</feature>
<feature type="binding site" evidence="1">
    <location>
        <begin position="220"/>
        <end position="222"/>
    </location>
    <ligand>
        <name>ATP</name>
        <dbReference type="ChEBI" id="CHEBI:30616"/>
    </ligand>
</feature>
<feature type="binding site" evidence="1">
    <location>
        <position position="220"/>
    </location>
    <ligand>
        <name>L-aspartate</name>
        <dbReference type="ChEBI" id="CHEBI:29991"/>
    </ligand>
</feature>
<feature type="binding site" evidence="1">
    <location>
        <position position="229"/>
    </location>
    <ligand>
        <name>ATP</name>
        <dbReference type="ChEBI" id="CHEBI:30616"/>
    </ligand>
</feature>
<feature type="binding site" evidence="1">
    <location>
        <position position="448"/>
    </location>
    <ligand>
        <name>L-aspartate</name>
        <dbReference type="ChEBI" id="CHEBI:29991"/>
    </ligand>
</feature>
<feature type="binding site" evidence="1">
    <location>
        <position position="482"/>
    </location>
    <ligand>
        <name>ATP</name>
        <dbReference type="ChEBI" id="CHEBI:30616"/>
    </ligand>
</feature>
<feature type="binding site" evidence="1">
    <location>
        <position position="489"/>
    </location>
    <ligand>
        <name>L-aspartate</name>
        <dbReference type="ChEBI" id="CHEBI:29991"/>
    </ligand>
</feature>
<feature type="binding site" evidence="1">
    <location>
        <begin position="534"/>
        <end position="537"/>
    </location>
    <ligand>
        <name>ATP</name>
        <dbReference type="ChEBI" id="CHEBI:30616"/>
    </ligand>
</feature>
<evidence type="ECO:0000255" key="1">
    <source>
        <dbReference type="HAMAP-Rule" id="MF_00044"/>
    </source>
</evidence>
<sequence length="588" mass="65071">MRTHFCGLVDETLIGQTVTLAGWTDVARNLGGVCFIDLRDHEGIVQVTVEPVAGDDASAELFKVAASLGYEDVLQVEGVVRARHAVNDKLRTGKVEVIATRISILNKAAPLPFHAHENPGEETRLKYRYLDLRRPEMQRMQRTRIKLVQALRRHLDARDFQDIETPILTKATPEGARDFLVPARMHPGEFYALPQSPQLFKQILMVAGFDRYYQIARCFRDEALRADRQLEFTQLDMEFAFVRERDVQDFVEDMMRAIFKEVVDVDLAAQFPRMTWAEAMRRYGSDKPDLRIALELVDVAELVKSSEFPVFTAAANDADGRVAALRIPGGATLSRKQIDDYAAHAAKYGAKGLAYIKLSETGEVSSPIAKFFSEEAFAALLKHVGAGNGDIVFFGAGGYTKVSDFMGALRLKAGKEFDLVAEGWAPLWVTDFPMFEWDEEAQRYVALHHPFTAPAVDDIADLRANARTAVSRGYDMVLNGNEIGGGSIRIHRPDMQSAVFELLGIGAEEARAKFGFLLDALNYGAPPHGGIAFGIDRIAALMAGTESIRDVIPFPKTTGAQDLMTDAPSPIAADQLAEVHVQVRSKQV</sequence>
<keyword id="KW-0030">Aminoacyl-tRNA synthetase</keyword>
<keyword id="KW-0067">ATP-binding</keyword>
<keyword id="KW-0963">Cytoplasm</keyword>
<keyword id="KW-0436">Ligase</keyword>
<keyword id="KW-0547">Nucleotide-binding</keyword>
<keyword id="KW-0648">Protein biosynthesis</keyword>
<organism>
    <name type="scientific">Xanthomonas oryzae pv. oryzae (strain MAFF 311018)</name>
    <dbReference type="NCBI Taxonomy" id="342109"/>
    <lineage>
        <taxon>Bacteria</taxon>
        <taxon>Pseudomonadati</taxon>
        <taxon>Pseudomonadota</taxon>
        <taxon>Gammaproteobacteria</taxon>
        <taxon>Lysobacterales</taxon>
        <taxon>Lysobacteraceae</taxon>
        <taxon>Xanthomonas</taxon>
    </lineage>
</organism>
<reference key="1">
    <citation type="journal article" date="2005" name="Jpn. Agric. Res. Q.">
        <title>Genome sequence of Xanthomonas oryzae pv. oryzae suggests contribution of large numbers of effector genes and insertion sequences to its race diversity.</title>
        <authorList>
            <person name="Ochiai H."/>
            <person name="Inoue Y."/>
            <person name="Takeya M."/>
            <person name="Sasaki A."/>
            <person name="Kaku H."/>
        </authorList>
    </citation>
    <scope>NUCLEOTIDE SEQUENCE [LARGE SCALE GENOMIC DNA]</scope>
    <source>
        <strain>MAFF 311018</strain>
    </source>
</reference>
<proteinExistence type="inferred from homology"/>
<protein>
    <recommendedName>
        <fullName evidence="1">Aspartate--tRNA ligase</fullName>
        <ecNumber evidence="1">6.1.1.12</ecNumber>
    </recommendedName>
    <alternativeName>
        <fullName evidence="1">Aspartyl-tRNA synthetase</fullName>
        <shortName evidence="1">AspRS</shortName>
    </alternativeName>
</protein>
<accession>Q2P582</accession>
<dbReference type="EC" id="6.1.1.12" evidence="1"/>
<dbReference type="EMBL" id="AP008229">
    <property type="protein sequence ID" value="BAE68295.1"/>
    <property type="molecule type" value="Genomic_DNA"/>
</dbReference>
<dbReference type="RefSeq" id="WP_011408113.1">
    <property type="nucleotide sequence ID" value="NC_007705.1"/>
</dbReference>
<dbReference type="SMR" id="Q2P582"/>
<dbReference type="KEGG" id="xom:XOO1540"/>
<dbReference type="HOGENOM" id="CLU_014330_3_2_6"/>
<dbReference type="GO" id="GO:0005737">
    <property type="term" value="C:cytoplasm"/>
    <property type="evidence" value="ECO:0007669"/>
    <property type="project" value="UniProtKB-SubCell"/>
</dbReference>
<dbReference type="GO" id="GO:0004815">
    <property type="term" value="F:aspartate-tRNA ligase activity"/>
    <property type="evidence" value="ECO:0007669"/>
    <property type="project" value="UniProtKB-UniRule"/>
</dbReference>
<dbReference type="GO" id="GO:0005524">
    <property type="term" value="F:ATP binding"/>
    <property type="evidence" value="ECO:0007669"/>
    <property type="project" value="UniProtKB-UniRule"/>
</dbReference>
<dbReference type="GO" id="GO:0003676">
    <property type="term" value="F:nucleic acid binding"/>
    <property type="evidence" value="ECO:0007669"/>
    <property type="project" value="InterPro"/>
</dbReference>
<dbReference type="GO" id="GO:0006422">
    <property type="term" value="P:aspartyl-tRNA aminoacylation"/>
    <property type="evidence" value="ECO:0007669"/>
    <property type="project" value="UniProtKB-UniRule"/>
</dbReference>
<dbReference type="CDD" id="cd00777">
    <property type="entry name" value="AspRS_core"/>
    <property type="match status" value="1"/>
</dbReference>
<dbReference type="CDD" id="cd04317">
    <property type="entry name" value="EcAspRS_like_N"/>
    <property type="match status" value="1"/>
</dbReference>
<dbReference type="Gene3D" id="3.30.930.10">
    <property type="entry name" value="Bira Bifunctional Protein, Domain 2"/>
    <property type="match status" value="1"/>
</dbReference>
<dbReference type="Gene3D" id="3.30.1360.30">
    <property type="entry name" value="GAD-like domain"/>
    <property type="match status" value="1"/>
</dbReference>
<dbReference type="Gene3D" id="2.40.50.140">
    <property type="entry name" value="Nucleic acid-binding proteins"/>
    <property type="match status" value="1"/>
</dbReference>
<dbReference type="HAMAP" id="MF_00044">
    <property type="entry name" value="Asp_tRNA_synth_type1"/>
    <property type="match status" value="1"/>
</dbReference>
<dbReference type="InterPro" id="IPR004364">
    <property type="entry name" value="Aa-tRNA-synt_II"/>
</dbReference>
<dbReference type="InterPro" id="IPR006195">
    <property type="entry name" value="aa-tRNA-synth_II"/>
</dbReference>
<dbReference type="InterPro" id="IPR045864">
    <property type="entry name" value="aa-tRNA-synth_II/BPL/LPL"/>
</dbReference>
<dbReference type="InterPro" id="IPR004524">
    <property type="entry name" value="Asp-tRNA-ligase_1"/>
</dbReference>
<dbReference type="InterPro" id="IPR047089">
    <property type="entry name" value="Asp-tRNA-ligase_1_N"/>
</dbReference>
<dbReference type="InterPro" id="IPR002312">
    <property type="entry name" value="Asp/Asn-tRNA-synth_IIb"/>
</dbReference>
<dbReference type="InterPro" id="IPR047090">
    <property type="entry name" value="AspRS_core"/>
</dbReference>
<dbReference type="InterPro" id="IPR004115">
    <property type="entry name" value="GAD-like_sf"/>
</dbReference>
<dbReference type="InterPro" id="IPR029351">
    <property type="entry name" value="GAD_dom"/>
</dbReference>
<dbReference type="InterPro" id="IPR012340">
    <property type="entry name" value="NA-bd_OB-fold"/>
</dbReference>
<dbReference type="InterPro" id="IPR004365">
    <property type="entry name" value="NA-bd_OB_tRNA"/>
</dbReference>
<dbReference type="NCBIfam" id="TIGR00459">
    <property type="entry name" value="aspS_bact"/>
    <property type="match status" value="1"/>
</dbReference>
<dbReference type="NCBIfam" id="NF001750">
    <property type="entry name" value="PRK00476.1"/>
    <property type="match status" value="1"/>
</dbReference>
<dbReference type="PANTHER" id="PTHR22594:SF5">
    <property type="entry name" value="ASPARTATE--TRNA LIGASE, MITOCHONDRIAL"/>
    <property type="match status" value="1"/>
</dbReference>
<dbReference type="PANTHER" id="PTHR22594">
    <property type="entry name" value="ASPARTYL/LYSYL-TRNA SYNTHETASE"/>
    <property type="match status" value="1"/>
</dbReference>
<dbReference type="Pfam" id="PF02938">
    <property type="entry name" value="GAD"/>
    <property type="match status" value="1"/>
</dbReference>
<dbReference type="Pfam" id="PF00152">
    <property type="entry name" value="tRNA-synt_2"/>
    <property type="match status" value="1"/>
</dbReference>
<dbReference type="Pfam" id="PF01336">
    <property type="entry name" value="tRNA_anti-codon"/>
    <property type="match status" value="1"/>
</dbReference>
<dbReference type="PRINTS" id="PR01042">
    <property type="entry name" value="TRNASYNTHASP"/>
</dbReference>
<dbReference type="SUPFAM" id="SSF55681">
    <property type="entry name" value="Class II aaRS and biotin synthetases"/>
    <property type="match status" value="1"/>
</dbReference>
<dbReference type="SUPFAM" id="SSF55261">
    <property type="entry name" value="GAD domain-like"/>
    <property type="match status" value="1"/>
</dbReference>
<dbReference type="SUPFAM" id="SSF50249">
    <property type="entry name" value="Nucleic acid-binding proteins"/>
    <property type="match status" value="1"/>
</dbReference>
<dbReference type="PROSITE" id="PS50862">
    <property type="entry name" value="AA_TRNA_LIGASE_II"/>
    <property type="match status" value="1"/>
</dbReference>
<comment type="function">
    <text evidence="1">Catalyzes the attachment of L-aspartate to tRNA(Asp) in a two-step reaction: L-aspartate is first activated by ATP to form Asp-AMP and then transferred to the acceptor end of tRNA(Asp).</text>
</comment>
<comment type="catalytic activity">
    <reaction evidence="1">
        <text>tRNA(Asp) + L-aspartate + ATP = L-aspartyl-tRNA(Asp) + AMP + diphosphate</text>
        <dbReference type="Rhea" id="RHEA:19649"/>
        <dbReference type="Rhea" id="RHEA-COMP:9660"/>
        <dbReference type="Rhea" id="RHEA-COMP:9678"/>
        <dbReference type="ChEBI" id="CHEBI:29991"/>
        <dbReference type="ChEBI" id="CHEBI:30616"/>
        <dbReference type="ChEBI" id="CHEBI:33019"/>
        <dbReference type="ChEBI" id="CHEBI:78442"/>
        <dbReference type="ChEBI" id="CHEBI:78516"/>
        <dbReference type="ChEBI" id="CHEBI:456215"/>
        <dbReference type="EC" id="6.1.1.12"/>
    </reaction>
</comment>
<comment type="subunit">
    <text evidence="1">Homodimer.</text>
</comment>
<comment type="subcellular location">
    <subcellularLocation>
        <location evidence="1">Cytoplasm</location>
    </subcellularLocation>
</comment>
<comment type="similarity">
    <text evidence="1">Belongs to the class-II aminoacyl-tRNA synthetase family. Type 1 subfamily.</text>
</comment>
<gene>
    <name evidence="1" type="primary">aspS</name>
    <name type="ordered locus">XOO1540</name>
</gene>
<name>SYD_XANOM</name>